<name>KDSB_SHESA</name>
<reference key="1">
    <citation type="submission" date="2006-09" db="EMBL/GenBank/DDBJ databases">
        <title>Complete sequence of chromosome 1 of Shewanella sp. ANA-3.</title>
        <authorList>
            <person name="Copeland A."/>
            <person name="Lucas S."/>
            <person name="Lapidus A."/>
            <person name="Barry K."/>
            <person name="Detter J.C."/>
            <person name="Glavina del Rio T."/>
            <person name="Hammon N."/>
            <person name="Israni S."/>
            <person name="Dalin E."/>
            <person name="Tice H."/>
            <person name="Pitluck S."/>
            <person name="Chertkov O."/>
            <person name="Brettin T."/>
            <person name="Bruce D."/>
            <person name="Han C."/>
            <person name="Tapia R."/>
            <person name="Gilna P."/>
            <person name="Schmutz J."/>
            <person name="Larimer F."/>
            <person name="Land M."/>
            <person name="Hauser L."/>
            <person name="Kyrpides N."/>
            <person name="Kim E."/>
            <person name="Newman D."/>
            <person name="Salticov C."/>
            <person name="Konstantinidis K."/>
            <person name="Klappenback J."/>
            <person name="Tiedje J."/>
            <person name="Richardson P."/>
        </authorList>
    </citation>
    <scope>NUCLEOTIDE SEQUENCE [LARGE SCALE GENOMIC DNA]</scope>
    <source>
        <strain>ANA-3</strain>
    </source>
</reference>
<keyword id="KW-0963">Cytoplasm</keyword>
<keyword id="KW-0448">Lipopolysaccharide biosynthesis</keyword>
<keyword id="KW-0548">Nucleotidyltransferase</keyword>
<keyword id="KW-0808">Transferase</keyword>
<feature type="chain" id="PRO_0000370157" description="8-amino-3,8-dideoxy-manno-octulosonate cytidylyltransferase">
    <location>
        <begin position="1"/>
        <end position="245"/>
    </location>
</feature>
<gene>
    <name evidence="1" type="primary">kdsB</name>
    <name type="ordered locus">Shewana3_1906</name>
</gene>
<dbReference type="EC" id="2.7.7.90" evidence="1"/>
<dbReference type="EMBL" id="CP000469">
    <property type="protein sequence ID" value="ABK48137.1"/>
    <property type="molecule type" value="Genomic_DNA"/>
</dbReference>
<dbReference type="RefSeq" id="WP_011622622.1">
    <property type="nucleotide sequence ID" value="NC_008577.1"/>
</dbReference>
<dbReference type="SMR" id="A0KWG8"/>
<dbReference type="STRING" id="94122.Shewana3_1906"/>
<dbReference type="GeneID" id="94727860"/>
<dbReference type="KEGG" id="shn:Shewana3_1906"/>
<dbReference type="eggNOG" id="COG1212">
    <property type="taxonomic scope" value="Bacteria"/>
</dbReference>
<dbReference type="HOGENOM" id="CLU_065038_0_1_6"/>
<dbReference type="OrthoDB" id="9815559at2"/>
<dbReference type="UniPathway" id="UPA00030"/>
<dbReference type="Proteomes" id="UP000002589">
    <property type="component" value="Chromosome"/>
</dbReference>
<dbReference type="GO" id="GO:0005829">
    <property type="term" value="C:cytosol"/>
    <property type="evidence" value="ECO:0007669"/>
    <property type="project" value="TreeGrafter"/>
</dbReference>
<dbReference type="GO" id="GO:0008690">
    <property type="term" value="F:3-deoxy-manno-octulosonate cytidylyltransferase activity"/>
    <property type="evidence" value="ECO:0007669"/>
    <property type="project" value="InterPro"/>
</dbReference>
<dbReference type="GO" id="GO:0009103">
    <property type="term" value="P:lipopolysaccharide biosynthetic process"/>
    <property type="evidence" value="ECO:0007669"/>
    <property type="project" value="UniProtKB-UniRule"/>
</dbReference>
<dbReference type="CDD" id="cd02517">
    <property type="entry name" value="CMP-KDO-Synthetase"/>
    <property type="match status" value="1"/>
</dbReference>
<dbReference type="FunFam" id="3.90.550.10:FF:000168">
    <property type="entry name" value="8-amino-3,8-dideoxy-manno-octulosonate cytidylyltransferase"/>
    <property type="match status" value="1"/>
</dbReference>
<dbReference type="Gene3D" id="3.90.550.10">
    <property type="entry name" value="Spore Coat Polysaccharide Biosynthesis Protein SpsA, Chain A"/>
    <property type="match status" value="1"/>
</dbReference>
<dbReference type="HAMAP" id="MF_00057">
    <property type="entry name" value="KdsB"/>
    <property type="match status" value="1"/>
</dbReference>
<dbReference type="InterPro" id="IPR003329">
    <property type="entry name" value="Cytidylyl_trans"/>
</dbReference>
<dbReference type="InterPro" id="IPR004528">
    <property type="entry name" value="KdsB"/>
</dbReference>
<dbReference type="InterPro" id="IPR029044">
    <property type="entry name" value="Nucleotide-diphossugar_trans"/>
</dbReference>
<dbReference type="NCBIfam" id="TIGR00466">
    <property type="entry name" value="kdsB"/>
    <property type="match status" value="1"/>
</dbReference>
<dbReference type="NCBIfam" id="NF003950">
    <property type="entry name" value="PRK05450.1-3"/>
    <property type="match status" value="1"/>
</dbReference>
<dbReference type="NCBIfam" id="NF003952">
    <property type="entry name" value="PRK05450.1-5"/>
    <property type="match status" value="1"/>
</dbReference>
<dbReference type="NCBIfam" id="NF009905">
    <property type="entry name" value="PRK13368.1"/>
    <property type="match status" value="1"/>
</dbReference>
<dbReference type="PANTHER" id="PTHR42866">
    <property type="entry name" value="3-DEOXY-MANNO-OCTULOSONATE CYTIDYLYLTRANSFERASE"/>
    <property type="match status" value="1"/>
</dbReference>
<dbReference type="PANTHER" id="PTHR42866:SF2">
    <property type="entry name" value="3-DEOXY-MANNO-OCTULOSONATE CYTIDYLYLTRANSFERASE, MITOCHONDRIAL"/>
    <property type="match status" value="1"/>
</dbReference>
<dbReference type="Pfam" id="PF02348">
    <property type="entry name" value="CTP_transf_3"/>
    <property type="match status" value="1"/>
</dbReference>
<dbReference type="SUPFAM" id="SSF53448">
    <property type="entry name" value="Nucleotide-diphospho-sugar transferases"/>
    <property type="match status" value="1"/>
</dbReference>
<organism>
    <name type="scientific">Shewanella sp. (strain ANA-3)</name>
    <dbReference type="NCBI Taxonomy" id="94122"/>
    <lineage>
        <taxon>Bacteria</taxon>
        <taxon>Pseudomonadati</taxon>
        <taxon>Pseudomonadota</taxon>
        <taxon>Gammaproteobacteria</taxon>
        <taxon>Alteromonadales</taxon>
        <taxon>Shewanellaceae</taxon>
        <taxon>Shewanella</taxon>
    </lineage>
</organism>
<sequence length="245" mass="27501">MNVTLLIPARYGSSRFPGKPLAPINGKPMIQHVYERASLAKGLTNIYVATDDERIKSAVEGFGGKVVMTSPDAASGTDRINDAINQLGLKDDDLVINLQGDQPLIDPTSIEQVISLFERHPGEFEMATLGYEIVNKAELDDPMHVKMVFDNDYYALYFSRARIPFGRDTKDYPVYKHLGVYAYTRRFVQAFAALPLGRLEDLEKLEQLRALEHGHKIKVAISAFDSIEVDTPEDIRKCEQRLAVD</sequence>
<accession>A0KWG8</accession>
<evidence type="ECO:0000255" key="1">
    <source>
        <dbReference type="HAMAP-Rule" id="MF_00057"/>
    </source>
</evidence>
<comment type="function">
    <text evidence="1">Activates KDO8N (a required 8-carbon sugar) for incorporation into bacterial lipopolysaccharide in the Shewanella genus.</text>
</comment>
<comment type="catalytic activity">
    <reaction evidence="1">
        <text>8-amino-3,8-dideoxy-alpha-D-manno-octulosonate + CTP = CMP-8-amino-3,8-dideoxy-alpha-D-manno-oct-2-ulosonate + diphosphate</text>
        <dbReference type="Rhea" id="RHEA:49284"/>
        <dbReference type="ChEBI" id="CHEBI:33019"/>
        <dbReference type="ChEBI" id="CHEBI:37563"/>
        <dbReference type="ChEBI" id="CHEBI:87091"/>
        <dbReference type="ChEBI" id="CHEBI:91089"/>
        <dbReference type="EC" id="2.7.7.90"/>
    </reaction>
</comment>
<comment type="pathway">
    <text evidence="1">Bacterial outer membrane biogenesis; lipopolysaccharide biosynthesis.</text>
</comment>
<comment type="subcellular location">
    <subcellularLocation>
        <location evidence="1">Cytoplasm</location>
    </subcellularLocation>
</comment>
<comment type="similarity">
    <text evidence="1">Belongs to the KdsB family.</text>
</comment>
<proteinExistence type="inferred from homology"/>
<protein>
    <recommendedName>
        <fullName evidence="1">8-amino-3,8-dideoxy-manno-octulosonate cytidylyltransferase</fullName>
        <ecNumber evidence="1">2.7.7.90</ecNumber>
    </recommendedName>
    <alternativeName>
        <fullName evidence="1">CMP-8-amino-3,8-dideoxy-manno-octulosonate synthase</fullName>
    </alternativeName>
</protein>